<sequence>MVMEKPSPLLVGREFVRQYYTLLNKAPEYLHRFYGRNSSYVHGGVDASGKPQEAVYGQNDIHHKVLSLNFSECHTKIRHVDAHATLSDGVVVQVMGLLSNSGQPERKFMQTFVLAPEGSVPNKFYVHNDMFRYEDEVFGDSEPELDEESEDEVEEEQEERQPSPEPVQENANSGYYEAHPVTNGIEEPLEESSHEPEPEPESETKTEELKPQVEEKNLEELEEKSTTPPPAEPVSLPQEPPKAFSWASVTSKNLPPSGTVSSSGIPPHVKAPVSQPRVEAKPEVQSQPPRVREQRPRERPGFPPRGPRPGRGDMEQNDSDNRRIIRYPDSHQLFVGNLPHDIDENELKEFFMSFGNVVELRINTKGVGGKLPNFGFVVFDDSEPVQRILIAKPIMFRGEVRLNVEEKKTRAARERETRGGGDDRRDIRRNDRGPGGPRGIVGGGMMRDRDGRGPPPRGGMAQKLGSGRGTGQMEGRFTGQRR</sequence>
<organism>
    <name type="scientific">Homo sapiens</name>
    <name type="common">Human</name>
    <dbReference type="NCBI Taxonomy" id="9606"/>
    <lineage>
        <taxon>Eukaryota</taxon>
        <taxon>Metazoa</taxon>
        <taxon>Chordata</taxon>
        <taxon>Craniata</taxon>
        <taxon>Vertebrata</taxon>
        <taxon>Euteleostomi</taxon>
        <taxon>Mammalia</taxon>
        <taxon>Eutheria</taxon>
        <taxon>Euarchontoglires</taxon>
        <taxon>Primates</taxon>
        <taxon>Haplorrhini</taxon>
        <taxon>Catarrhini</taxon>
        <taxon>Hominidae</taxon>
        <taxon>Homo</taxon>
    </lineage>
</organism>
<accession>Q9UN86</accession>
<accession>A8K6X1</accession>
<accession>O60606</accession>
<accession>O75149</accession>
<accession>Q9UPA1</accession>
<keyword id="KW-0002">3D-structure</keyword>
<keyword id="KW-0025">Alternative splicing</keyword>
<keyword id="KW-0963">Cytoplasm</keyword>
<keyword id="KW-0903">Direct protein sequencing</keyword>
<keyword id="KW-0945">Host-virus interaction</keyword>
<keyword id="KW-0391">Immunity</keyword>
<keyword id="KW-0399">Innate immunity</keyword>
<keyword id="KW-1017">Isopeptide bond</keyword>
<keyword id="KW-0488">Methylation</keyword>
<keyword id="KW-0509">mRNA transport</keyword>
<keyword id="KW-0597">Phosphoprotein</keyword>
<keyword id="KW-1267">Proteomics identification</keyword>
<keyword id="KW-1185">Reference proteome</keyword>
<keyword id="KW-0694">RNA-binding</keyword>
<keyword id="KW-0813">Transport</keyword>
<keyword id="KW-0832">Ubl conjugation</keyword>
<proteinExistence type="evidence at protein level"/>
<reference key="1">
    <citation type="submission" date="1999-04" db="EMBL/GenBank/DDBJ databases">
        <title>Characterisation and chromosomal location of G3BP-1 and G3BP-2a/b, members of a novel SH3 domain-binding and RNA-binding protein family implicated in signal transduction.</title>
        <authorList>
            <person name="Kennedy D."/>
            <person name="Mattick J.S."/>
        </authorList>
    </citation>
    <scope>NUCLEOTIDE SEQUENCE [MRNA] (ISOFORMS A AND B)</scope>
    <source>
        <tissue>Brain</tissue>
    </source>
</reference>
<reference key="2">
    <citation type="journal article" date="1998" name="DNA Res.">
        <title>Prediction of the coding sequences of unidentified human genes. X. The complete sequences of 100 new cDNA clones from brain which can code for large proteins in vitro.</title>
        <authorList>
            <person name="Ishikawa K."/>
            <person name="Nagase T."/>
            <person name="Suyama M."/>
            <person name="Miyajima N."/>
            <person name="Tanaka A."/>
            <person name="Kotani H."/>
            <person name="Nomura N."/>
            <person name="Ohara O."/>
        </authorList>
    </citation>
    <scope>NUCLEOTIDE SEQUENCE [LARGE SCALE MRNA] (ISOFORM A)</scope>
    <source>
        <tissue>Brain</tissue>
    </source>
</reference>
<reference key="3">
    <citation type="submission" date="1998-02" db="EMBL/GenBank/DDBJ databases">
        <authorList>
            <person name="Guitard E."/>
        </authorList>
    </citation>
    <scope>NUCLEOTIDE SEQUENCE [MRNA] (ISOFORM B)</scope>
    <source>
        <tissue>Brain</tissue>
    </source>
</reference>
<reference key="4">
    <citation type="submission" date="1998-03" db="EMBL/GenBank/DDBJ databases">
        <authorList>
            <person name="Kennedy D."/>
            <person name="Ru K."/>
            <person name="Mattick J.S."/>
        </authorList>
    </citation>
    <scope>NUCLEOTIDE SEQUENCE [MRNA] (ISOFORM B)</scope>
    <source>
        <tissue>Brain</tissue>
    </source>
</reference>
<reference key="5">
    <citation type="journal article" date="2004" name="Nat. Genet.">
        <title>Complete sequencing and characterization of 21,243 full-length human cDNAs.</title>
        <authorList>
            <person name="Ota T."/>
            <person name="Suzuki Y."/>
            <person name="Nishikawa T."/>
            <person name="Otsuki T."/>
            <person name="Sugiyama T."/>
            <person name="Irie R."/>
            <person name="Wakamatsu A."/>
            <person name="Hayashi K."/>
            <person name="Sato H."/>
            <person name="Nagai K."/>
            <person name="Kimura K."/>
            <person name="Makita H."/>
            <person name="Sekine M."/>
            <person name="Obayashi M."/>
            <person name="Nishi T."/>
            <person name="Shibahara T."/>
            <person name="Tanaka T."/>
            <person name="Ishii S."/>
            <person name="Yamamoto J."/>
            <person name="Saito K."/>
            <person name="Kawai Y."/>
            <person name="Isono Y."/>
            <person name="Nakamura Y."/>
            <person name="Nagahari K."/>
            <person name="Murakami K."/>
            <person name="Yasuda T."/>
            <person name="Iwayanagi T."/>
            <person name="Wagatsuma M."/>
            <person name="Shiratori A."/>
            <person name="Sudo H."/>
            <person name="Hosoiri T."/>
            <person name="Kaku Y."/>
            <person name="Kodaira H."/>
            <person name="Kondo H."/>
            <person name="Sugawara M."/>
            <person name="Takahashi M."/>
            <person name="Kanda K."/>
            <person name="Yokoi T."/>
            <person name="Furuya T."/>
            <person name="Kikkawa E."/>
            <person name="Omura Y."/>
            <person name="Abe K."/>
            <person name="Kamihara K."/>
            <person name="Katsuta N."/>
            <person name="Sato K."/>
            <person name="Tanikawa M."/>
            <person name="Yamazaki M."/>
            <person name="Ninomiya K."/>
            <person name="Ishibashi T."/>
            <person name="Yamashita H."/>
            <person name="Murakawa K."/>
            <person name="Fujimori K."/>
            <person name="Tanai H."/>
            <person name="Kimata M."/>
            <person name="Watanabe M."/>
            <person name="Hiraoka S."/>
            <person name="Chiba Y."/>
            <person name="Ishida S."/>
            <person name="Ono Y."/>
            <person name="Takiguchi S."/>
            <person name="Watanabe S."/>
            <person name="Yosida M."/>
            <person name="Hotuta T."/>
            <person name="Kusano J."/>
            <person name="Kanehori K."/>
            <person name="Takahashi-Fujii A."/>
            <person name="Hara H."/>
            <person name="Tanase T.-O."/>
            <person name="Nomura Y."/>
            <person name="Togiya S."/>
            <person name="Komai F."/>
            <person name="Hara R."/>
            <person name="Takeuchi K."/>
            <person name="Arita M."/>
            <person name="Imose N."/>
            <person name="Musashino K."/>
            <person name="Yuuki H."/>
            <person name="Oshima A."/>
            <person name="Sasaki N."/>
            <person name="Aotsuka S."/>
            <person name="Yoshikawa Y."/>
            <person name="Matsunawa H."/>
            <person name="Ichihara T."/>
            <person name="Shiohata N."/>
            <person name="Sano S."/>
            <person name="Moriya S."/>
            <person name="Momiyama H."/>
            <person name="Satoh N."/>
            <person name="Takami S."/>
            <person name="Terashima Y."/>
            <person name="Suzuki O."/>
            <person name="Nakagawa S."/>
            <person name="Senoh A."/>
            <person name="Mizoguchi H."/>
            <person name="Goto Y."/>
            <person name="Shimizu F."/>
            <person name="Wakebe H."/>
            <person name="Hishigaki H."/>
            <person name="Watanabe T."/>
            <person name="Sugiyama A."/>
            <person name="Takemoto M."/>
            <person name="Kawakami B."/>
            <person name="Yamazaki M."/>
            <person name="Watanabe K."/>
            <person name="Kumagai A."/>
            <person name="Itakura S."/>
            <person name="Fukuzumi Y."/>
            <person name="Fujimori Y."/>
            <person name="Komiyama M."/>
            <person name="Tashiro H."/>
            <person name="Tanigami A."/>
            <person name="Fujiwara T."/>
            <person name="Ono T."/>
            <person name="Yamada K."/>
            <person name="Fujii Y."/>
            <person name="Ozaki K."/>
            <person name="Hirao M."/>
            <person name="Ohmori Y."/>
            <person name="Kawabata A."/>
            <person name="Hikiji T."/>
            <person name="Kobatake N."/>
            <person name="Inagaki H."/>
            <person name="Ikema Y."/>
            <person name="Okamoto S."/>
            <person name="Okitani R."/>
            <person name="Kawakami T."/>
            <person name="Noguchi S."/>
            <person name="Itoh T."/>
            <person name="Shigeta K."/>
            <person name="Senba T."/>
            <person name="Matsumura K."/>
            <person name="Nakajima Y."/>
            <person name="Mizuno T."/>
            <person name="Morinaga M."/>
            <person name="Sasaki M."/>
            <person name="Togashi T."/>
            <person name="Oyama M."/>
            <person name="Hata H."/>
            <person name="Watanabe M."/>
            <person name="Komatsu T."/>
            <person name="Mizushima-Sugano J."/>
            <person name="Satoh T."/>
            <person name="Shirai Y."/>
            <person name="Takahashi Y."/>
            <person name="Nakagawa K."/>
            <person name="Okumura K."/>
            <person name="Nagase T."/>
            <person name="Nomura N."/>
            <person name="Kikuchi H."/>
            <person name="Masuho Y."/>
            <person name="Yamashita R."/>
            <person name="Nakai K."/>
            <person name="Yada T."/>
            <person name="Nakamura Y."/>
            <person name="Ohara O."/>
            <person name="Isogai T."/>
            <person name="Sugano S."/>
        </authorList>
    </citation>
    <scope>NUCLEOTIDE SEQUENCE [LARGE SCALE MRNA] (ISOFORM A)</scope>
    <source>
        <tissue>Placenta</tissue>
    </source>
</reference>
<reference key="6">
    <citation type="submission" date="2005-07" db="EMBL/GenBank/DDBJ databases">
        <authorList>
            <person name="Mural R.J."/>
            <person name="Istrail S."/>
            <person name="Sutton G.G."/>
            <person name="Florea L."/>
            <person name="Halpern A.L."/>
            <person name="Mobarry C.M."/>
            <person name="Lippert R."/>
            <person name="Walenz B."/>
            <person name="Shatkay H."/>
            <person name="Dew I."/>
            <person name="Miller J.R."/>
            <person name="Flanigan M.J."/>
            <person name="Edwards N.J."/>
            <person name="Bolanos R."/>
            <person name="Fasulo D."/>
            <person name="Halldorsson B.V."/>
            <person name="Hannenhalli S."/>
            <person name="Turner R."/>
            <person name="Yooseph S."/>
            <person name="Lu F."/>
            <person name="Nusskern D.R."/>
            <person name="Shue B.C."/>
            <person name="Zheng X.H."/>
            <person name="Zhong F."/>
            <person name="Delcher A.L."/>
            <person name="Huson D.H."/>
            <person name="Kravitz S.A."/>
            <person name="Mouchard L."/>
            <person name="Reinert K."/>
            <person name="Remington K.A."/>
            <person name="Clark A.G."/>
            <person name="Waterman M.S."/>
            <person name="Eichler E.E."/>
            <person name="Adams M.D."/>
            <person name="Hunkapiller M.W."/>
            <person name="Myers E.W."/>
            <person name="Venter J.C."/>
        </authorList>
    </citation>
    <scope>NUCLEOTIDE SEQUENCE [LARGE SCALE GENOMIC DNA]</scope>
</reference>
<reference key="7">
    <citation type="journal article" date="2004" name="Genome Res.">
        <title>The status, quality, and expansion of the NIH full-length cDNA project: the Mammalian Gene Collection (MGC).</title>
        <authorList>
            <consortium name="The MGC Project Team"/>
        </authorList>
    </citation>
    <scope>NUCLEOTIDE SEQUENCE [LARGE SCALE MRNA] (ISOFORM B)</scope>
    <source>
        <tissue>B-cell</tissue>
    </source>
</reference>
<reference key="8">
    <citation type="submission" date="2008-12" db="UniProtKB">
        <authorList>
            <person name="Bienvenut W.V."/>
            <person name="Heiserich L."/>
            <person name="Boulahbel H."/>
            <person name="Gottlieb E."/>
            <person name="Vousden K.H."/>
            <person name="Lukashchuk N."/>
            <person name="Lilla S."/>
            <person name="von Kriegsheim A."/>
            <person name="Lempens A."/>
            <person name="Kolch W."/>
        </authorList>
    </citation>
    <scope>PROTEIN SEQUENCE OF 2-13; 18-32; 124-132; 206-224; 243-252; 278-290; 371-397 AND 439-447</scope>
    <scope>CLEAVAGE OF INITIATOR METHIONINE</scope>
    <scope>IDENTIFICATION BY MASS SPECTROMETRY</scope>
    <source>
        <tissue>Colon carcinoma</tissue>
        <tissue>Lung carcinoma</tissue>
        <tissue>Ovarian carcinoma</tissue>
    </source>
</reference>
<reference key="9">
    <citation type="journal article" date="2000" name="J. Biol. Chem.">
        <title>IkappaBalpha and IkappaBalpha /NF-kappa B complexes are retained in the cytoplasm through interaction with a novel partner, RasGAP SH3-binding protein 2.</title>
        <authorList>
            <person name="Prigent M."/>
            <person name="Barlat I."/>
            <person name="Langen H."/>
            <person name="Dargemont C."/>
        </authorList>
    </citation>
    <scope>INTERACTION WITH NFKBIA</scope>
</reference>
<reference key="10">
    <citation type="journal article" date="2006" name="Cell">
        <title>Global, in vivo, and site-specific phosphorylation dynamics in signaling networks.</title>
        <authorList>
            <person name="Olsen J.V."/>
            <person name="Blagoev B."/>
            <person name="Gnad F."/>
            <person name="Macek B."/>
            <person name="Kumar C."/>
            <person name="Mortensen P."/>
            <person name="Mann M."/>
        </authorList>
    </citation>
    <scope>PHOSPHORYLATION [LARGE SCALE ANALYSIS] AT SER-141 AND SER-149</scope>
    <scope>IDENTIFICATION BY MASS SPECTROMETRY [LARGE SCALE ANALYSIS]</scope>
    <source>
        <tissue>Cervix carcinoma</tissue>
    </source>
</reference>
<reference key="11">
    <citation type="journal article" date="2008" name="J. Virol.">
        <title>Different types of nsP3-containing protein complexes in Sindbis virus-infected cells.</title>
        <authorList>
            <person name="Gorchakov R."/>
            <person name="Garmashova N."/>
            <person name="Frolova E."/>
            <person name="Frolov I."/>
        </authorList>
    </citation>
    <scope>INTERACTION WITH SINBIS VIRUS NON-STRUCTURAL PROTEIN 3 (MICROBIAL INFECTION)</scope>
</reference>
<reference key="12">
    <citation type="journal article" date="2008" name="Mol. Cell">
        <title>Kinase-selective enrichment enables quantitative phosphoproteomics of the kinome across the cell cycle.</title>
        <authorList>
            <person name="Daub H."/>
            <person name="Olsen J.V."/>
            <person name="Bairlein M."/>
            <person name="Gnad F."/>
            <person name="Oppermann F.S."/>
            <person name="Korner R."/>
            <person name="Greff Z."/>
            <person name="Keri G."/>
            <person name="Stemmann O."/>
            <person name="Mann M."/>
        </authorList>
    </citation>
    <scope>PHOSPHORYLATION [LARGE SCALE ANALYSIS] AT SER-141 AND SER-149</scope>
    <scope>IDENTIFICATION BY MASS SPECTROMETRY [LARGE SCALE ANALYSIS]</scope>
    <source>
        <tissue>Cervix carcinoma</tissue>
    </source>
</reference>
<reference key="13">
    <citation type="journal article" date="2008" name="Proc. Natl. Acad. Sci. U.S.A.">
        <title>A quantitative atlas of mitotic phosphorylation.</title>
        <authorList>
            <person name="Dephoure N."/>
            <person name="Zhou C."/>
            <person name="Villen J."/>
            <person name="Beausoleil S.A."/>
            <person name="Bakalarski C.E."/>
            <person name="Elledge S.J."/>
            <person name="Gygi S.P."/>
        </authorList>
    </citation>
    <scope>PHOSPHORYLATION [LARGE SCALE ANALYSIS] AT SER-141 AND SER-149</scope>
    <scope>PHOSPHORYLATION [LARGE SCALE ANALYSIS] AT THR-227 AND SER-235 (ISOFORM B)</scope>
    <scope>IDENTIFICATION BY MASS SPECTROMETRY [LARGE SCALE ANALYSIS]</scope>
    <source>
        <tissue>Cervix carcinoma</tissue>
    </source>
</reference>
<reference key="14">
    <citation type="journal article" date="2009" name="Anal. Chem.">
        <title>Lys-N and trypsin cover complementary parts of the phosphoproteome in a refined SCX-based approach.</title>
        <authorList>
            <person name="Gauci S."/>
            <person name="Helbig A.O."/>
            <person name="Slijper M."/>
            <person name="Krijgsveld J."/>
            <person name="Heck A.J."/>
            <person name="Mohammed S."/>
        </authorList>
    </citation>
    <scope>IDENTIFICATION BY MASS SPECTROMETRY [LARGE SCALE ANALYSIS]</scope>
</reference>
<reference key="15">
    <citation type="journal article" date="2009" name="Sci. Signal.">
        <title>Quantitative phosphoproteomic analysis of T cell receptor signaling reveals system-wide modulation of protein-protein interactions.</title>
        <authorList>
            <person name="Mayya V."/>
            <person name="Lundgren D.H."/>
            <person name="Hwang S.-I."/>
            <person name="Rezaul K."/>
            <person name="Wu L."/>
            <person name="Eng J.K."/>
            <person name="Rodionov V."/>
            <person name="Han D.K."/>
        </authorList>
    </citation>
    <scope>PHOSPHORYLATION [LARGE SCALE ANALYSIS] AT SER-141; SER-149 AND THR-227</scope>
    <scope>IDENTIFICATION BY MASS SPECTROMETRY [LARGE SCALE ANALYSIS]</scope>
    <source>
        <tissue>Leukemic T-cell</tissue>
    </source>
</reference>
<reference key="16">
    <citation type="journal article" date="2010" name="Sci. Signal.">
        <title>Quantitative phosphoproteomics reveals widespread full phosphorylation site occupancy during mitosis.</title>
        <authorList>
            <person name="Olsen J.V."/>
            <person name="Vermeulen M."/>
            <person name="Santamaria A."/>
            <person name="Kumar C."/>
            <person name="Miller M.L."/>
            <person name="Jensen L.J."/>
            <person name="Gnad F."/>
            <person name="Cox J."/>
            <person name="Jensen T.S."/>
            <person name="Nigg E.A."/>
            <person name="Brunak S."/>
            <person name="Mann M."/>
        </authorList>
    </citation>
    <scope>IDENTIFICATION BY MASS SPECTROMETRY [LARGE SCALE ANALYSIS]</scope>
    <source>
        <tissue>Cervix carcinoma</tissue>
    </source>
</reference>
<reference key="17">
    <citation type="journal article" date="2011" name="BMC Syst. Biol.">
        <title>Initial characterization of the human central proteome.</title>
        <authorList>
            <person name="Burkard T.R."/>
            <person name="Planyavsky M."/>
            <person name="Kaupe I."/>
            <person name="Breitwieser F.P."/>
            <person name="Buerckstuemmer T."/>
            <person name="Bennett K.L."/>
            <person name="Superti-Furga G."/>
            <person name="Colinge J."/>
        </authorList>
    </citation>
    <scope>IDENTIFICATION BY MASS SPECTROMETRY [LARGE SCALE ANALYSIS]</scope>
</reference>
<reference key="18">
    <citation type="journal article" date="2011" name="Sci. Signal.">
        <title>System-wide temporal characterization of the proteome and phosphoproteome of human embryonic stem cell differentiation.</title>
        <authorList>
            <person name="Rigbolt K.T."/>
            <person name="Prokhorova T.A."/>
            <person name="Akimov V."/>
            <person name="Henningsen J."/>
            <person name="Johansen P.T."/>
            <person name="Kratchmarova I."/>
            <person name="Kassem M."/>
            <person name="Mann M."/>
            <person name="Olsen J.V."/>
            <person name="Blagoev B."/>
        </authorList>
    </citation>
    <scope>PHOSPHORYLATION [LARGE SCALE ANALYSIS] AT SER-141 AND SER-149</scope>
    <scope>IDENTIFICATION BY MASS SPECTROMETRY [LARGE SCALE ANALYSIS]</scope>
</reference>
<reference key="19">
    <citation type="journal article" date="2013" name="J. Proteome Res.">
        <title>Toward a comprehensive characterization of a human cancer cell phosphoproteome.</title>
        <authorList>
            <person name="Zhou H."/>
            <person name="Di Palma S."/>
            <person name="Preisinger C."/>
            <person name="Peng M."/>
            <person name="Polat A.N."/>
            <person name="Heck A.J."/>
            <person name="Mohammed S."/>
        </authorList>
    </citation>
    <scope>PHOSPHORYLATION [LARGE SCALE ANALYSIS] AT THR-227 AND SER-466</scope>
    <scope>IDENTIFICATION BY MASS SPECTROMETRY [LARGE SCALE ANALYSIS]</scope>
    <source>
        <tissue>Cervix carcinoma</tissue>
        <tissue>Erythroleukemia</tissue>
    </source>
</reference>
<reference key="20">
    <citation type="journal article" date="2013" name="Genes Cells">
        <title>Both G3BP1 and G3BP2 contribute to stress granule formation.</title>
        <authorList>
            <person name="Matsuki H."/>
            <person name="Takahashi M."/>
            <person name="Higuchi M."/>
            <person name="Makokha G.N."/>
            <person name="Oie M."/>
            <person name="Fujii M."/>
        </authorList>
    </citation>
    <scope>FUNCTION</scope>
    <scope>INTERACTION WITH USP10; PABPC1 AND G3BP1</scope>
    <scope>SUBCELLULAR LOCATION</scope>
    <scope>SUBUNIT</scope>
</reference>
<reference key="21">
    <citation type="journal article" date="2014" name="J. Proteomics">
        <title>An enzyme assisted RP-RPLC approach for in-depth analysis of human liver phosphoproteome.</title>
        <authorList>
            <person name="Bian Y."/>
            <person name="Song C."/>
            <person name="Cheng K."/>
            <person name="Dong M."/>
            <person name="Wang F."/>
            <person name="Huang J."/>
            <person name="Sun D."/>
            <person name="Wang L."/>
            <person name="Ye M."/>
            <person name="Zou H."/>
        </authorList>
    </citation>
    <scope>IDENTIFICATION BY MASS SPECTROMETRY [LARGE SCALE ANALYSIS]</scope>
    <source>
        <tissue>Liver</tissue>
    </source>
</reference>
<reference key="22">
    <citation type="journal article" date="2014" name="Mol. Cell. Proteomics">
        <title>Immunoaffinity enrichment and mass spectrometry analysis of protein methylation.</title>
        <authorList>
            <person name="Guo A."/>
            <person name="Gu H."/>
            <person name="Zhou J."/>
            <person name="Mulhern D."/>
            <person name="Wang Y."/>
            <person name="Lee K.A."/>
            <person name="Yang V."/>
            <person name="Aguiar M."/>
            <person name="Kornhauser J."/>
            <person name="Jia X."/>
            <person name="Ren J."/>
            <person name="Beausoleil S.A."/>
            <person name="Silva J.C."/>
            <person name="Vemulapalli V."/>
            <person name="Bedford M.T."/>
            <person name="Comb M.J."/>
        </authorList>
    </citation>
    <scope>METHYLATION [LARGE SCALE ANALYSIS] AT ARG-457 AND ARG-468</scope>
    <scope>IDENTIFICATION BY MASS SPECTROMETRY [LARGE SCALE ANALYSIS]</scope>
    <source>
        <tissue>Colon carcinoma</tissue>
    </source>
</reference>
<reference key="23">
    <citation type="journal article" date="2014" name="Nat. Struct. Mol. Biol.">
        <title>Uncovering global SUMOylation signaling networks in a site-specific manner.</title>
        <authorList>
            <person name="Hendriks I.A."/>
            <person name="D'Souza R.C."/>
            <person name="Yang B."/>
            <person name="Verlaan-de Vries M."/>
            <person name="Mann M."/>
            <person name="Vertegaal A.C."/>
        </authorList>
    </citation>
    <scope>SUMOYLATION [LARGE SCALE ANALYSIS] AT LYS-281</scope>
    <scope>IDENTIFICATION BY MASS SPECTROMETRY [LARGE SCALE ANALYSIS]</scope>
</reference>
<reference key="24">
    <citation type="journal article" date="2015" name="Proteomics">
        <title>N-terminome analysis of the human mitochondrial proteome.</title>
        <authorList>
            <person name="Vaca Jacome A.S."/>
            <person name="Rabilloud T."/>
            <person name="Schaeffer-Reiss C."/>
            <person name="Rompais M."/>
            <person name="Ayoub D."/>
            <person name="Lane L."/>
            <person name="Bairoch A."/>
            <person name="Van Dorsselaer A."/>
            <person name="Carapito C."/>
        </authorList>
    </citation>
    <scope>IDENTIFICATION BY MASS SPECTROMETRY [LARGE SCALE ANALYSIS]</scope>
</reference>
<reference key="25">
    <citation type="journal article" date="2016" name="J. Cell Biol.">
        <title>G3BP-Caprin1-USP10 complexes mediate stress granule condensation and associate with 40S subunits.</title>
        <authorList>
            <person name="Kedersha N."/>
            <person name="Panas M.D."/>
            <person name="Achorn C.A."/>
            <person name="Lyons S."/>
            <person name="Tisdale S."/>
            <person name="Hickman T."/>
            <person name="Thomas M."/>
            <person name="Lieberman J."/>
            <person name="McInerney G.M."/>
            <person name="Ivanov P."/>
            <person name="Anderson P."/>
        </authorList>
    </citation>
    <scope>FUNCTION</scope>
    <scope>SUBCELLULAR LOCATION</scope>
    <scope>INTERACTION WITH 40S RIBOSOME; USP10 AND CAPRIN1</scope>
</reference>
<reference key="26">
    <citation type="journal article" date="2017" name="Nat. Struct. Mol. Biol.">
        <title>Site-specific mapping of the human SUMO proteome reveals co-modification with phosphorylation.</title>
        <authorList>
            <person name="Hendriks I.A."/>
            <person name="Lyon D."/>
            <person name="Young C."/>
            <person name="Jensen L.J."/>
            <person name="Vertegaal A.C."/>
            <person name="Nielsen M.L."/>
        </authorList>
    </citation>
    <scope>SUMOYLATION [LARGE SCALE ANALYSIS] AT LYS-281</scope>
    <scope>IDENTIFICATION BY MASS SPECTROMETRY [LARGE SCALE ANALYSIS]</scope>
</reference>
<reference key="27">
    <citation type="journal article" date="2019" name="J. Virol.">
        <title>Foot-and-Mouth Disease Virus Leader Protease Cleaves G3BP1 and G3BP2 and Inhibits Stress Granule Formation.</title>
        <authorList>
            <person name="Visser L.J."/>
            <person name="Medina G.N."/>
            <person name="Rabouw H.H."/>
            <person name="de Groot R.J."/>
            <person name="Langereis M.A."/>
            <person name="de Los Santos T."/>
            <person name="van Kuppeveld F.J.M."/>
        </authorList>
    </citation>
    <scope>SUBCELLULAR LOCATION</scope>
    <scope>CLEAVAGE BY FOOT-AND-MOUTH DISEASE VIRUS LEADER PROTEASE (MICROBIAL INFECTION)</scope>
</reference>
<reference key="28">
    <citation type="journal article" date="2020" name="Cell">
        <title>Competing protein-RNA interaction networks control multiphase intracellular organization.</title>
        <authorList>
            <person name="Sanders D.W."/>
            <person name="Kedersha N."/>
            <person name="Lee D.S.W."/>
            <person name="Strom A.R."/>
            <person name="Drake V."/>
            <person name="Riback J.A."/>
            <person name="Bracha D."/>
            <person name="Eeftens J.M."/>
            <person name="Iwanicki A."/>
            <person name="Wang A."/>
            <person name="Wei M.T."/>
            <person name="Whitney G."/>
            <person name="Lyons S.M."/>
            <person name="Anderson P."/>
            <person name="Jacobs W.M."/>
            <person name="Ivanov P."/>
            <person name="Brangwynne C.P."/>
        </authorList>
    </citation>
    <scope>FUNCTION</scope>
</reference>
<reference key="29">
    <citation type="journal article" date="2020" name="Cell">
        <title>G3BP1 is a tunable switch that triggers phase separation to assemble stress granules.</title>
        <authorList>
            <person name="Yang P."/>
            <person name="Mathieu C."/>
            <person name="Kolaitis R.M."/>
            <person name="Zhang P."/>
            <person name="Messing J."/>
            <person name="Yurtsever U."/>
            <person name="Yang Z."/>
            <person name="Wu J."/>
            <person name="Li Y."/>
            <person name="Pan Q."/>
            <person name="Yu J."/>
            <person name="Martin E.W."/>
            <person name="Mittag T."/>
            <person name="Kim H.J."/>
            <person name="Taylor J.P."/>
        </authorList>
    </citation>
    <scope>FUNCTION</scope>
</reference>
<reference key="30">
    <citation type="journal article" date="2020" name="Cell">
        <title>RNA-Induced conformational switching and clustering of G3BP drive stress granule assembly by condensation.</title>
        <authorList>
            <person name="Guillen-Boixet J."/>
            <person name="Kopach A."/>
            <person name="Holehouse A.S."/>
            <person name="Wittmann S."/>
            <person name="Jahnel M."/>
            <person name="Schluessler R."/>
            <person name="Kim K."/>
            <person name="Trussina I.R.E.A."/>
            <person name="Wang J."/>
            <person name="Mateju D."/>
            <person name="Poser I."/>
            <person name="Maharana S."/>
            <person name="Ruer-Gruss M."/>
            <person name="Richter D."/>
            <person name="Zhang X."/>
            <person name="Chang Y.T."/>
            <person name="Guck J."/>
            <person name="Honigmann A."/>
            <person name="Mahamid J."/>
            <person name="Hyman A.A."/>
            <person name="Pappu R.V."/>
            <person name="Alberti S."/>
            <person name="Franzmann T.M."/>
        </authorList>
    </citation>
    <scope>FUNCTION</scope>
</reference>
<reference key="31">
    <citation type="journal article" date="2020" name="Mol. Cell">
        <title>The G3BP1-family-USP10 deubiquitinase complex rescues ubiquitinated 40S subunits of ribosomes stalled in translation from lysosomal degradation.</title>
        <authorList>
            <person name="Meyer C."/>
            <person name="Garzia A."/>
            <person name="Morozov P."/>
            <person name="Molina H."/>
            <person name="Tuschl T."/>
        </authorList>
    </citation>
    <scope>INTERACTION WITH USP10</scope>
</reference>
<reference key="32">
    <citation type="journal article" date="2022" name="Sci. Adv.">
        <title>De novo variants in genes regulating stress granule assembly associate with neurodevelopmental disorders.</title>
        <authorList>
            <person name="Jia X."/>
            <person name="Zhang S."/>
            <person name="Tan S."/>
            <person name="Du B."/>
            <person name="He M."/>
            <person name="Qin H."/>
            <person name="Chen J."/>
            <person name="Duan X."/>
            <person name="Luo J."/>
            <person name="Chen F."/>
            <person name="Ouyang L."/>
            <person name="Wang J."/>
            <person name="Chen G."/>
            <person name="Yu B."/>
            <person name="Zhang G."/>
            <person name="Zhang Z."/>
            <person name="Lyu Y."/>
            <person name="Huang Y."/>
            <person name="Jiao J."/>
            <person name="Chen J.Y.H."/>
            <person name="Swoboda K.J."/>
            <person name="Agolini E."/>
            <person name="Novelli A."/>
            <person name="Leoni C."/>
            <person name="Zampino G."/>
            <person name="Cappuccio G."/>
            <person name="Brunetti-Pierri N."/>
            <person name="Gerard B."/>
            <person name="Ginglinger E."/>
            <person name="Richer J."/>
            <person name="McMillan H."/>
            <person name="White-Brown A."/>
            <person name="Hoekzema K."/>
            <person name="Bernier R.A."/>
            <person name="Kurtz-Nelson E.C."/>
            <person name="Earl R.K."/>
            <person name="Meddens C."/>
            <person name="Alders M."/>
            <person name="Fuchs M."/>
            <person name="Caumes R."/>
            <person name="Brunelle P."/>
            <person name="Smol T."/>
            <person name="Kuehl R."/>
            <person name="Day-Salvatore D.L."/>
            <person name="Monaghan K.G."/>
            <person name="Morrow M.M."/>
            <person name="Eichler E.E."/>
            <person name="Hu Z."/>
            <person name="Yuan L."/>
            <person name="Tan J."/>
            <person name="Xia K."/>
            <person name="Shen Y."/>
            <person name="Guo H."/>
        </authorList>
    </citation>
    <scope>FUNCTION</scope>
    <scope>VARIANTS TRP-13; ASN-151; LYS-158; PRO-209; ASP-399; GLU-408 AND CYS-438</scope>
    <scope>CHARACTERIZATION OF VARIANTS TRP-13; ASN-151; LYS-158; PRO-209; ASP-399; GLU-408 AND CYS-438</scope>
</reference>
<reference evidence="26" key="33">
    <citation type="journal article" date="2015" name="Biochem. Biophys. Res. Commun.">
        <title>Crystal structure of the G3BP2 NTF2-like domain in complex with a canonical FGDF motif peptide.</title>
        <authorList>
            <person name="Kristensen O."/>
        </authorList>
    </citation>
    <scope>X-RAY CRYSTALLOGRAPHY (2.75 ANGSTROMS) OF 1-139 IN COMPLEX WITH SEMLIKI FOREST VIRUS NON-STRUCTURAL PROTEIN 3</scope>
    <scope>INTERACTION WITH SEMLIKI FOREST VIRUS NON-STRUCTURAL PROTEIN 3 (MICROBIAL INFECTION)</scope>
</reference>
<reference key="34">
    <citation type="journal article" date="2006" name="Science">
        <title>The consensus coding sequences of human breast and colorectal cancers.</title>
        <authorList>
            <person name="Sjoeblom T."/>
            <person name="Jones S."/>
            <person name="Wood L.D."/>
            <person name="Parsons D.W."/>
            <person name="Lin J."/>
            <person name="Barber T.D."/>
            <person name="Mandelker D."/>
            <person name="Leary R.J."/>
            <person name="Ptak J."/>
            <person name="Silliman N."/>
            <person name="Szabo S."/>
            <person name="Buckhaults P."/>
            <person name="Farrell C."/>
            <person name="Meeh P."/>
            <person name="Markowitz S.D."/>
            <person name="Willis J."/>
            <person name="Dawson D."/>
            <person name="Willson J.K.V."/>
            <person name="Gazdar A.F."/>
            <person name="Hartigan J."/>
            <person name="Wu L."/>
            <person name="Liu C."/>
            <person name="Parmigiani G."/>
            <person name="Park B.H."/>
            <person name="Bachman K.E."/>
            <person name="Papadopoulos N."/>
            <person name="Vogelstein B."/>
            <person name="Kinzler K.W."/>
            <person name="Velculescu V.E."/>
        </authorList>
    </citation>
    <scope>VARIANT [LARGE SCALE ANALYSIS] LEU-434</scope>
</reference>
<feature type="initiator methionine" description="Removed" evidence="18">
    <location>
        <position position="1"/>
    </location>
</feature>
<feature type="chain" id="PRO_0000194800" description="Ras GTPase-activating protein-binding protein 2">
    <location>
        <begin position="2"/>
        <end position="482"/>
    </location>
</feature>
<feature type="domain" description="NTF2" evidence="3">
    <location>
        <begin position="11"/>
        <end position="133"/>
    </location>
</feature>
<feature type="domain" description="RRM" evidence="4">
    <location>
        <begin position="331"/>
        <end position="409"/>
    </location>
</feature>
<feature type="region of interest" description="Disordered" evidence="5">
    <location>
        <begin position="140"/>
        <end position="171"/>
    </location>
</feature>
<feature type="region of interest" description="Acidic disordered region" evidence="2">
    <location>
        <begin position="142"/>
        <end position="220"/>
    </location>
</feature>
<feature type="region of interest" description="Disordered" evidence="5">
    <location>
        <begin position="187"/>
        <end position="318"/>
    </location>
</feature>
<feature type="region of interest" description="RG-rich region" evidence="2">
    <location>
        <begin position="404"/>
        <end position="476"/>
    </location>
</feature>
<feature type="region of interest" description="Disordered" evidence="5">
    <location>
        <begin position="408"/>
        <end position="482"/>
    </location>
</feature>
<feature type="compositionally biased region" description="Acidic residues" evidence="5">
    <location>
        <begin position="140"/>
        <end position="158"/>
    </location>
</feature>
<feature type="compositionally biased region" description="Basic and acidic residues" evidence="5">
    <location>
        <begin position="191"/>
        <end position="225"/>
    </location>
</feature>
<feature type="compositionally biased region" description="Polar residues" evidence="5">
    <location>
        <begin position="247"/>
        <end position="264"/>
    </location>
</feature>
<feature type="compositionally biased region" description="Basic and acidic residues" evidence="5">
    <location>
        <begin position="290"/>
        <end position="300"/>
    </location>
</feature>
<feature type="compositionally biased region" description="Basic and acidic residues" evidence="5">
    <location>
        <begin position="408"/>
        <end position="432"/>
    </location>
</feature>
<feature type="compositionally biased region" description="Gly residues" evidence="5">
    <location>
        <begin position="433"/>
        <end position="445"/>
    </location>
</feature>
<feature type="modified residue" description="Phosphoserine" evidence="27 28 29 30 31">
    <location>
        <position position="141"/>
    </location>
</feature>
<feature type="modified residue" description="Phosphoserine" evidence="27 28 29 30 31">
    <location>
        <position position="149"/>
    </location>
</feature>
<feature type="modified residue" description="Phosphoserine" evidence="1">
    <location>
        <position position="225"/>
    </location>
</feature>
<feature type="modified residue" description="Phosphothreonine" evidence="30 32">
    <location>
        <position position="227"/>
    </location>
</feature>
<feature type="modified residue" description="N6-succinyllysine" evidence="1">
    <location>
        <position position="392"/>
    </location>
</feature>
<feature type="modified residue" description="Omega-N-methylarginine" evidence="33">
    <location>
        <position position="457"/>
    </location>
</feature>
<feature type="modified residue" description="Phosphoserine" evidence="32">
    <location>
        <position position="466"/>
    </location>
</feature>
<feature type="modified residue" description="Omega-N-methylarginine" evidence="33">
    <location>
        <position position="468"/>
    </location>
</feature>
<feature type="cross-link" description="Glycyl lysine isopeptide (Lys-Gly) (interchain with G-Cter in SUMO2)" evidence="34 35">
    <location>
        <position position="281"/>
    </location>
</feature>
<feature type="splice variant" id="VSP_003605" description="In isoform B." evidence="19 21 22 23">
    <location>
        <begin position="243"/>
        <end position="275"/>
    </location>
</feature>
<feature type="sequence variant" id="VAR_088954" description="Found in a patient with a neurodevelopmental disorder; uncertain significance; no effect on function in stress granule formation shown by rescue assays in transfected G3BP2-deficient cells." evidence="17">
    <original>R</original>
    <variation>W</variation>
    <location>
        <position position="13"/>
    </location>
</feature>
<feature type="sequence variant" id="VAR_088955" description="Found in a patient with a neurodevelopmental disorder; uncertain significance; decreased function in stress granule formation shown by rescue assays in transfected G3BP2-deficient cells." evidence="17">
    <original>D</original>
    <variation>N</variation>
    <location>
        <position position="151"/>
    </location>
</feature>
<feature type="sequence variant" id="VAR_088956" description="Found in a patient with a neurodevelopmental disorder; uncertain significance; no effect on function in stress granule formation shown by rescue assays in transfected G3BP2-deficient cells." evidence="17">
    <original>E</original>
    <variation>K</variation>
    <location>
        <position position="158"/>
    </location>
</feature>
<feature type="sequence variant" id="VAR_088957" description="Found in a patient with a neurodevelopmental disorder; uncertain significance; no effect on function in stress granule formation shown by rescue assays in transfected G3BP2-deficient cells." evidence="17">
    <original>L</original>
    <variation>P</variation>
    <location>
        <position position="209"/>
    </location>
</feature>
<feature type="sequence variant" id="VAR_088958" description="Found in a patient with a neurodevelopmental disorder; uncertain significance; no effect on function in stress granule formation shown by rescue assays in transfected G3BP2-deficient cells." evidence="17">
    <original>E</original>
    <variation>D</variation>
    <location>
        <position position="399"/>
    </location>
</feature>
<feature type="sequence variant" id="VAR_088959" description="Found in a patient with a neurodevelopmental disorder; uncertain significance; no effect on function in stress granule formation shown by rescue assays in transfected G3BP2-deficient cells." evidence="17">
    <original>K</original>
    <variation>E</variation>
    <location>
        <position position="408"/>
    </location>
</feature>
<feature type="sequence variant" id="VAR_036128" description="In a breast cancer sample; somatic mutation." evidence="7">
    <original>P</original>
    <variation>L</variation>
    <location>
        <position position="434"/>
    </location>
</feature>
<feature type="sequence variant" id="VAR_088960" description="Found in a patient with a neurodevelopmental disorder; uncertain significance; no effect on function in stress granule formation shown by rescue assays in transfected G3BP2-deficient cells." evidence="17">
    <original>R</original>
    <variation>C</variation>
    <location>
        <position position="438"/>
    </location>
</feature>
<feature type="sequence conflict" description="In Ref. 1; AAD51932." evidence="24" ref="1">
    <original>P</original>
    <variation>S</variation>
    <location>
        <position position="267"/>
    </location>
</feature>
<feature type="sequence conflict" description="In Ref. 3; AAC15705." evidence="24" ref="3">
    <original>E</original>
    <variation>V</variation>
    <location>
        <position position="359"/>
    </location>
</feature>
<feature type="sequence conflict" description="In Ref. 3; AAC15705." evidence="24" ref="3">
    <original>M</original>
    <variation>I</variation>
    <location>
        <position position="460"/>
    </location>
</feature>
<feature type="strand" evidence="36">
    <location>
        <begin position="3"/>
        <end position="5"/>
    </location>
</feature>
<feature type="helix" evidence="36">
    <location>
        <begin position="8"/>
        <end position="25"/>
    </location>
</feature>
<feature type="helix" evidence="36">
    <location>
        <begin position="27"/>
        <end position="33"/>
    </location>
</feature>
<feature type="strand" evidence="36">
    <location>
        <begin position="34"/>
        <end position="43"/>
    </location>
</feature>
<feature type="helix" evidence="36">
    <location>
        <begin position="58"/>
        <end position="66"/>
    </location>
</feature>
<feature type="strand" evidence="36">
    <location>
        <begin position="74"/>
        <end position="84"/>
    </location>
</feature>
<feature type="helix" evidence="36">
    <location>
        <begin position="86"/>
        <end position="88"/>
    </location>
</feature>
<feature type="strand" evidence="36">
    <location>
        <begin position="90"/>
        <end position="99"/>
    </location>
</feature>
<feature type="strand" evidence="36">
    <location>
        <begin position="106"/>
        <end position="116"/>
    </location>
</feature>
<feature type="strand" evidence="36">
    <location>
        <begin position="118"/>
        <end position="133"/>
    </location>
</feature>
<feature type="helix" evidence="36">
    <location>
        <begin position="134"/>
        <end position="137"/>
    </location>
</feature>
<feature type="modified residue" description="Phosphothreonine" evidence="28">
    <location sequence="Q9UN86-2">
        <position position="227"/>
    </location>
</feature>
<feature type="modified residue" description="Phosphoserine" evidence="28">
    <location sequence="Q9UN86-2">
        <position position="235"/>
    </location>
</feature>
<comment type="function">
    <text evidence="2 9 11 14 15 16 17">Scaffold protein that plays an essential role in cytoplasmic stress granule formation which acts as a platform for antiviral signaling (PubMed:23279204, PubMed:32302570, PubMed:32302571, PubMed:32302572). Plays an essential role in stress granule formation (PubMed:27022092, PubMed:32302570, PubMed:32302571, PubMed:32302572, PubMed:35977029). Stress granules are membraneless compartments that store mRNAs and proteins, such as stalled translation pre-initiation complexes, in response to stress (PubMed:32302570, PubMed:32302571, PubMed:32302572). Promotes formation of stress granules phase-separated membraneless compartment by undergoing liquid-liquid phase separation (LLPS) upon unfolded RNA-binding: functions as a molecular switch that triggers RNA-dependent LLPS in response to a rise in intracellular free RNA concentrations (By similarity).</text>
</comment>
<comment type="activity regulation">
    <text evidence="2">Under physiological conditions, G3BP2 adopts a compact state that is stabilized by intramolecular interactions between the RG-rich and the acidic regions that inhibit phase separation. Upon stress, polysomes disassemble and mRNAs are released in an unfolded protein-free state. Binding of unfolded mRNA to G3BP2 outcompetes the intramolecular interactions and RNA-bound G3BP2 adopts an expanded conformation in which the RG-rich region becomes exposed to engage in protein-protein and protein-RNA interactions, allowing physical cross-linking of RNA molecules to form protein-RNA condensates, leading to liquid-liquid phase separation (LLPS).</text>
</comment>
<comment type="subunit">
    <text evidence="6 9 11 13">Forms homooligomers (PubMed:23279204). Forms heterodimers with G3BP1 (PubMed:23279204). Interacts with NFKBIA (via N-terminus) (PubMed:10969074). Interacts (via NTF2 domain) with USP10; inhibiting stress granule formation (PubMed:23279204, PubMed:27022092, PubMed:31981475). Interacts (via NTF2 domain) with CAPRIN1; promoting stress granule formation (PubMed:27022092). Associates (via RG-rich region) with 40S ribosome subunits (PubMed:27022092). Interacts with PABPC1 (PubMed:23279204).</text>
</comment>
<comment type="subunit">
    <text evidence="8 10">(Microbial infection) Interacts with non-structural protein 3 (via C-terminus) of Sindbis virus and Semliki forest virus; this interaction inhibits the formation of host stress granules on viral mRNAs and the nsp3-G3BP2 complexes bind viral RNAs and probably orchestrate the assembly of viral replication complexes.</text>
</comment>
<comment type="interaction">
    <interactant intactId="EBI-1044298">
        <id>Q9UN86</id>
    </interactant>
    <interactant intactId="EBI-1797287">
        <id>Q15672</id>
        <label>TWIST1</label>
    </interactant>
    <organismsDiffer>false</organismsDiffer>
    <experiments>2</experiments>
</comment>
<comment type="interaction">
    <interactant intactId="EBI-1044298">
        <id>Q9UN86</id>
    </interactant>
    <interactant intactId="EBI-2510389">
        <id>Q14694</id>
        <label>USP10</label>
    </interactant>
    <organismsDiffer>false</organismsDiffer>
    <experiments>13</experiments>
</comment>
<comment type="interaction">
    <interactant intactId="EBI-1044298">
        <id>Q9UN86</id>
    </interactant>
    <interactant intactId="EBI-25475856">
        <id>P0DTC9</id>
        <label>N</label>
    </interactant>
    <organismsDiffer>true</organismsDiffer>
    <experiments>37</experiments>
</comment>
<comment type="interaction">
    <interactant intactId="EBI-1044298">
        <id>Q9UN86</id>
    </interactant>
    <interactant intactId="EBI-6123119">
        <id>P26687</id>
        <label>Twist1</label>
    </interactant>
    <organismsDiffer>true</organismsDiffer>
    <experiments>2</experiments>
</comment>
<comment type="interaction">
    <interactant intactId="EBI-11035716">
        <id>Q9UN86-2</id>
    </interactant>
    <interactant intactId="EBI-1210753">
        <id>Q7Z417</id>
        <label>NUFIP2</label>
    </interactant>
    <organismsDiffer>false</organismsDiffer>
    <experiments>4</experiments>
</comment>
<comment type="interaction">
    <interactant intactId="EBI-11035716">
        <id>Q9UN86-2</id>
    </interactant>
    <interactant intactId="EBI-2510389">
        <id>Q14694</id>
        <label>USP10</label>
    </interactant>
    <organismsDiffer>false</organismsDiffer>
    <experiments>3</experiments>
</comment>
<comment type="interaction">
    <interactant intactId="EBI-11035716">
        <id>Q9UN86-2</id>
    </interactant>
    <interactant intactId="EBI-6255994">
        <id>Q5T7W0</id>
        <label>ZNF618</label>
    </interactant>
    <organismsDiffer>false</organismsDiffer>
    <experiments>3</experiments>
</comment>
<comment type="subcellular location">
    <subcellularLocation>
        <location evidence="9 12">Cytoplasm</location>
    </subcellularLocation>
    <subcellularLocation>
        <location evidence="9 11 12">Cytoplasm</location>
        <location evidence="9 11 12">Stress granule</location>
    </subcellularLocation>
</comment>
<comment type="alternative products">
    <event type="alternative splicing"/>
    <isoform>
        <id>Q9UN86-1</id>
        <name>A</name>
        <sequence type="displayed"/>
    </isoform>
    <isoform>
        <id>Q9UN86-2</id>
        <name>B</name>
        <sequence type="described" ref="VSP_003605"/>
    </isoform>
</comment>
<comment type="domain">
    <text evidence="2">Can mediate both protein-protein and protein-RNA interactions via the NTF2 domain and RNA-binding domain RRM; protein-protein and protein-RNA interactions are essential for undergoing liquid-liquid phase separation (LLPS).</text>
</comment>
<comment type="domain">
    <text evidence="2">The acidic disordered region acts as a negative regulator of phase separation.</text>
</comment>
<comment type="domain">
    <text evidence="2">The NTF2 domain mediates interaction with CAPRIN1 and USP10 regulators, thereby regulating assembly of stress granules.</text>
</comment>
<comment type="PTM">
    <text evidence="12">(Microbial infection) Cleaved by foot-and-mouth disease virus leader protease; this cleavage suppresses the formation of cytoplasmic stress granules.</text>
</comment>
<comment type="sequence caution" evidence="24">
    <conflict type="erroneous initiation">
        <sequence resource="EMBL-CDS" id="BAA31635"/>
    </conflict>
</comment>
<gene>
    <name evidence="20 25" type="primary">G3BP2</name>
    <name type="synonym">KIAA0660</name>
</gene>
<dbReference type="EMBL" id="AF145284">
    <property type="protein sequence ID" value="AAD51932.1"/>
    <property type="molecule type" value="mRNA"/>
</dbReference>
<dbReference type="EMBL" id="AB014560">
    <property type="protein sequence ID" value="BAA31635.2"/>
    <property type="status" value="ALT_INIT"/>
    <property type="molecule type" value="mRNA"/>
</dbReference>
<dbReference type="EMBL" id="AF051311">
    <property type="protein sequence ID" value="AAC15705.1"/>
    <property type="molecule type" value="mRNA"/>
</dbReference>
<dbReference type="EMBL" id="AF053535">
    <property type="protein sequence ID" value="AAC95292.1"/>
    <property type="molecule type" value="mRNA"/>
</dbReference>
<dbReference type="EMBL" id="AK291786">
    <property type="protein sequence ID" value="BAF84475.1"/>
    <property type="molecule type" value="mRNA"/>
</dbReference>
<dbReference type="EMBL" id="CH471057">
    <property type="protein sequence ID" value="EAX05742.1"/>
    <property type="molecule type" value="Genomic_DNA"/>
</dbReference>
<dbReference type="EMBL" id="BC011731">
    <property type="protein sequence ID" value="AAH11731.1"/>
    <property type="molecule type" value="mRNA"/>
</dbReference>
<dbReference type="CCDS" id="CCDS3571.1">
    <molecule id="Q9UN86-1"/>
</dbReference>
<dbReference type="CCDS" id="CCDS3572.1">
    <molecule id="Q9UN86-2"/>
</dbReference>
<dbReference type="RefSeq" id="NP_001386933.1">
    <molecule id="Q9UN86-1"/>
    <property type="nucleotide sequence ID" value="NM_001400004.1"/>
</dbReference>
<dbReference type="RefSeq" id="NP_001386934.1">
    <molecule id="Q9UN86-1"/>
    <property type="nucleotide sequence ID" value="NM_001400005.1"/>
</dbReference>
<dbReference type="RefSeq" id="NP_001386935.1">
    <molecule id="Q9UN86-1"/>
    <property type="nucleotide sequence ID" value="NM_001400006.1"/>
</dbReference>
<dbReference type="RefSeq" id="NP_001386936.1">
    <molecule id="Q9UN86-1"/>
    <property type="nucleotide sequence ID" value="NM_001400007.1"/>
</dbReference>
<dbReference type="RefSeq" id="NP_001386937.1">
    <molecule id="Q9UN86-1"/>
    <property type="nucleotide sequence ID" value="NM_001400008.1"/>
</dbReference>
<dbReference type="RefSeq" id="NP_001386939.1">
    <molecule id="Q9UN86-1"/>
    <property type="nucleotide sequence ID" value="NM_001400010.1"/>
</dbReference>
<dbReference type="RefSeq" id="NP_001386940.1">
    <molecule id="Q9UN86-1"/>
    <property type="nucleotide sequence ID" value="NM_001400011.1"/>
</dbReference>
<dbReference type="RefSeq" id="NP_001386941.1">
    <molecule id="Q9UN86-1"/>
    <property type="nucleotide sequence ID" value="NM_001400012.1"/>
</dbReference>
<dbReference type="RefSeq" id="NP_001386942.1">
    <molecule id="Q9UN86-2"/>
    <property type="nucleotide sequence ID" value="NM_001400013.1"/>
</dbReference>
<dbReference type="RefSeq" id="NP_001386943.1">
    <molecule id="Q9UN86-2"/>
    <property type="nucleotide sequence ID" value="NM_001400014.1"/>
</dbReference>
<dbReference type="RefSeq" id="NP_001386944.1">
    <molecule id="Q9UN86-2"/>
    <property type="nucleotide sequence ID" value="NM_001400015.1"/>
</dbReference>
<dbReference type="RefSeq" id="NP_001386945.1">
    <molecule id="Q9UN86-2"/>
    <property type="nucleotide sequence ID" value="NM_001400016.1"/>
</dbReference>
<dbReference type="RefSeq" id="NP_001386946.1">
    <molecule id="Q9UN86-2"/>
    <property type="nucleotide sequence ID" value="NM_001400017.1"/>
</dbReference>
<dbReference type="RefSeq" id="NP_001386947.1">
    <molecule id="Q9UN86-2"/>
    <property type="nucleotide sequence ID" value="NM_001400018.1"/>
</dbReference>
<dbReference type="RefSeq" id="NP_001386948.1">
    <molecule id="Q9UN86-2"/>
    <property type="nucleotide sequence ID" value="NM_001400019.1"/>
</dbReference>
<dbReference type="RefSeq" id="NP_001386949.1">
    <molecule id="Q9UN86-2"/>
    <property type="nucleotide sequence ID" value="NM_001400020.1"/>
</dbReference>
<dbReference type="RefSeq" id="NP_036429.2">
    <molecule id="Q9UN86-1"/>
    <property type="nucleotide sequence ID" value="NM_012297.4"/>
</dbReference>
<dbReference type="RefSeq" id="NP_987100.1">
    <molecule id="Q9UN86-2"/>
    <property type="nucleotide sequence ID" value="NM_203504.3"/>
</dbReference>
<dbReference type="RefSeq" id="NP_987101.1">
    <molecule id="Q9UN86-1"/>
    <property type="nucleotide sequence ID" value="NM_203505.3"/>
</dbReference>
<dbReference type="RefSeq" id="XP_005263439.1">
    <property type="nucleotide sequence ID" value="XM_005263382.2"/>
</dbReference>
<dbReference type="RefSeq" id="XP_005263440.1">
    <property type="nucleotide sequence ID" value="XM_005263383.3"/>
</dbReference>
<dbReference type="RefSeq" id="XP_011530743.1">
    <property type="nucleotide sequence ID" value="XM_011532441.2"/>
</dbReference>
<dbReference type="RefSeq" id="XP_016864365.1">
    <property type="nucleotide sequence ID" value="XM_017008876.1"/>
</dbReference>
<dbReference type="RefSeq" id="XP_016864366.1">
    <property type="nucleotide sequence ID" value="XM_017008877.1"/>
</dbReference>
<dbReference type="RefSeq" id="XP_016864367.1">
    <property type="nucleotide sequence ID" value="XM_017008878.1"/>
</dbReference>
<dbReference type="RefSeq" id="XP_016864368.1">
    <property type="nucleotide sequence ID" value="XM_017008879.1"/>
</dbReference>
<dbReference type="RefSeq" id="XP_047272421.1">
    <molecule id="Q9UN86-1"/>
    <property type="nucleotide sequence ID" value="XM_047416465.1"/>
</dbReference>
<dbReference type="RefSeq" id="XP_047272422.1">
    <molecule id="Q9UN86-2"/>
    <property type="nucleotide sequence ID" value="XM_047416466.1"/>
</dbReference>
<dbReference type="RefSeq" id="XP_054207318.1">
    <molecule id="Q9UN86-1"/>
    <property type="nucleotide sequence ID" value="XM_054351343.1"/>
</dbReference>
<dbReference type="RefSeq" id="XP_054207319.1">
    <molecule id="Q9UN86-1"/>
    <property type="nucleotide sequence ID" value="XM_054351344.1"/>
</dbReference>
<dbReference type="RefSeq" id="XP_054207320.1">
    <molecule id="Q9UN86-2"/>
    <property type="nucleotide sequence ID" value="XM_054351345.1"/>
</dbReference>
<dbReference type="RefSeq" id="XP_054207321.1">
    <molecule id="Q9UN86-2"/>
    <property type="nucleotide sequence ID" value="XM_054351346.1"/>
</dbReference>
<dbReference type="PDB" id="5DRV">
    <property type="method" value="X-ray"/>
    <property type="resolution" value="2.75 A"/>
    <property type="chains" value="A=1-139"/>
</dbReference>
<dbReference type="PDBsum" id="5DRV"/>
<dbReference type="SMR" id="Q9UN86"/>
<dbReference type="BioGRID" id="115237">
    <property type="interactions" value="516"/>
</dbReference>
<dbReference type="CORUM" id="Q9UN86"/>
<dbReference type="DIP" id="DIP-50299N"/>
<dbReference type="ELM" id="Q9UN86"/>
<dbReference type="FunCoup" id="Q9UN86">
    <property type="interactions" value="2493"/>
</dbReference>
<dbReference type="IntAct" id="Q9UN86">
    <property type="interactions" value="342"/>
</dbReference>
<dbReference type="MINT" id="Q9UN86"/>
<dbReference type="STRING" id="9606.ENSP00000352738"/>
<dbReference type="GlyCosmos" id="Q9UN86">
    <property type="glycosylation" value="2 sites, 1 glycan"/>
</dbReference>
<dbReference type="GlyGen" id="Q9UN86">
    <property type="glycosylation" value="2 sites, 1 O-linked glycan (2 sites)"/>
</dbReference>
<dbReference type="iPTMnet" id="Q9UN86"/>
<dbReference type="MetOSite" id="Q9UN86"/>
<dbReference type="PhosphoSitePlus" id="Q9UN86"/>
<dbReference type="SwissPalm" id="Q9UN86"/>
<dbReference type="BioMuta" id="G3BP2"/>
<dbReference type="DMDM" id="116242482"/>
<dbReference type="jPOST" id="Q9UN86"/>
<dbReference type="MassIVE" id="Q9UN86"/>
<dbReference type="PaxDb" id="9606-ENSP00000352738"/>
<dbReference type="PeptideAtlas" id="Q9UN86"/>
<dbReference type="ProteomicsDB" id="85270">
    <molecule id="Q9UN86-1"/>
</dbReference>
<dbReference type="ProteomicsDB" id="85271">
    <molecule id="Q9UN86-2"/>
</dbReference>
<dbReference type="Pumba" id="Q9UN86"/>
<dbReference type="Antibodypedia" id="13391">
    <property type="antibodies" value="156 antibodies from 27 providers"/>
</dbReference>
<dbReference type="DNASU" id="9908"/>
<dbReference type="Ensembl" id="ENST00000357854.7">
    <molecule id="Q9UN86-2"/>
    <property type="protein sequence ID" value="ENSP00000350518.3"/>
    <property type="gene ID" value="ENSG00000138757.15"/>
</dbReference>
<dbReference type="Ensembl" id="ENST00000359707.9">
    <molecule id="Q9UN86-1"/>
    <property type="protein sequence ID" value="ENSP00000352738.4"/>
    <property type="gene ID" value="ENSG00000138757.15"/>
</dbReference>
<dbReference type="Ensembl" id="ENST00000395719.7">
    <molecule id="Q9UN86-1"/>
    <property type="protein sequence ID" value="ENSP00000379069.3"/>
    <property type="gene ID" value="ENSG00000138757.15"/>
</dbReference>
<dbReference type="Ensembl" id="ENST00000676470.1">
    <molecule id="Q9UN86-2"/>
    <property type="protein sequence ID" value="ENSP00000503688.1"/>
    <property type="gene ID" value="ENSG00000138757.15"/>
</dbReference>
<dbReference type="Ensembl" id="ENST00000676584.1">
    <molecule id="Q9UN86-1"/>
    <property type="protein sequence ID" value="ENSP00000504496.1"/>
    <property type="gene ID" value="ENSG00000138757.15"/>
</dbReference>
<dbReference type="Ensembl" id="ENST00000676666.1">
    <molecule id="Q9UN86-2"/>
    <property type="protein sequence ID" value="ENSP00000503496.1"/>
    <property type="gene ID" value="ENSG00000138757.15"/>
</dbReference>
<dbReference type="Ensembl" id="ENST00000676839.1">
    <molecule id="Q9UN86-2"/>
    <property type="protein sequence ID" value="ENSP00000503442.1"/>
    <property type="gene ID" value="ENSG00000138757.15"/>
</dbReference>
<dbReference type="Ensembl" id="ENST00000676974.1">
    <molecule id="Q9UN86-1"/>
    <property type="protein sequence ID" value="ENSP00000503669.1"/>
    <property type="gene ID" value="ENSG00000138757.15"/>
</dbReference>
<dbReference type="Ensembl" id="ENST00000677125.1">
    <molecule id="Q9UN86-2"/>
    <property type="protein sequence ID" value="ENSP00000503209.1"/>
    <property type="gene ID" value="ENSG00000138757.15"/>
</dbReference>
<dbReference type="Ensembl" id="ENST00000677162.1">
    <molecule id="Q9UN86-1"/>
    <property type="protein sequence ID" value="ENSP00000504101.1"/>
    <property type="gene ID" value="ENSG00000138757.15"/>
</dbReference>
<dbReference type="Ensembl" id="ENST00000677171.1">
    <molecule id="Q9UN86-1"/>
    <property type="protein sequence ID" value="ENSP00000503911.1"/>
    <property type="gene ID" value="ENSG00000138757.15"/>
</dbReference>
<dbReference type="Ensembl" id="ENST00000677201.1">
    <molecule id="Q9UN86-1"/>
    <property type="protein sequence ID" value="ENSP00000504523.1"/>
    <property type="gene ID" value="ENSG00000138757.15"/>
</dbReference>
<dbReference type="Ensembl" id="ENST00000677265.1">
    <molecule id="Q9UN86-2"/>
    <property type="protein sequence ID" value="ENSP00000504591.1"/>
    <property type="gene ID" value="ENSG00000138757.15"/>
</dbReference>
<dbReference type="Ensembl" id="ENST00000677333.1">
    <molecule id="Q9UN86-1"/>
    <property type="protein sequence ID" value="ENSP00000503355.1"/>
    <property type="gene ID" value="ENSG00000138757.15"/>
</dbReference>
<dbReference type="Ensembl" id="ENST00000677566.1">
    <molecule id="Q9UN86-1"/>
    <property type="protein sequence ID" value="ENSP00000504361.1"/>
    <property type="gene ID" value="ENSG00000138757.15"/>
</dbReference>
<dbReference type="Ensembl" id="ENST00000677583.1">
    <molecule id="Q9UN86-2"/>
    <property type="protein sequence ID" value="ENSP00000504564.1"/>
    <property type="gene ID" value="ENSG00000138757.15"/>
</dbReference>
<dbReference type="Ensembl" id="ENST00000677606.1">
    <molecule id="Q9UN86-1"/>
    <property type="protein sequence ID" value="ENSP00000503228.1"/>
    <property type="gene ID" value="ENSG00000138757.15"/>
</dbReference>
<dbReference type="Ensembl" id="ENST00000677620.1">
    <molecule id="Q9UN86-1"/>
    <property type="protein sequence ID" value="ENSP00000504316.1"/>
    <property type="gene ID" value="ENSG00000138757.15"/>
</dbReference>
<dbReference type="Ensembl" id="ENST00000677876.1">
    <molecule id="Q9UN86-2"/>
    <property type="protein sequence ID" value="ENSP00000504206.1"/>
    <property type="gene ID" value="ENSG00000138757.15"/>
</dbReference>
<dbReference type="Ensembl" id="ENST00000678062.1">
    <molecule id="Q9UN86-1"/>
    <property type="protein sequence ID" value="ENSP00000503239.1"/>
    <property type="gene ID" value="ENSG00000138757.15"/>
</dbReference>
<dbReference type="Ensembl" id="ENST00000678100.1">
    <molecule id="Q9UN86-1"/>
    <property type="protein sequence ID" value="ENSP00000504698.1"/>
    <property type="gene ID" value="ENSG00000138757.15"/>
</dbReference>
<dbReference type="Ensembl" id="ENST00000678122.1">
    <molecule id="Q9UN86-2"/>
    <property type="protein sequence ID" value="ENSP00000504363.1"/>
    <property type="gene ID" value="ENSG00000138757.15"/>
</dbReference>
<dbReference type="Ensembl" id="ENST00000678123.1">
    <molecule id="Q9UN86-1"/>
    <property type="protein sequence ID" value="ENSP00000503504.1"/>
    <property type="gene ID" value="ENSG00000138757.15"/>
</dbReference>
<dbReference type="Ensembl" id="ENST00000678265.1">
    <molecule id="Q9UN86-1"/>
    <property type="protein sequence ID" value="ENSP00000504159.1"/>
    <property type="gene ID" value="ENSG00000138757.15"/>
</dbReference>
<dbReference type="Ensembl" id="ENST00000678273.1">
    <molecule id="Q9UN86-2"/>
    <property type="protein sequence ID" value="ENSP00000502996.1"/>
    <property type="gene ID" value="ENSG00000138757.15"/>
</dbReference>
<dbReference type="Ensembl" id="ENST00000678552.1">
    <molecule id="Q9UN86-2"/>
    <property type="protein sequence ID" value="ENSP00000504588.1"/>
    <property type="gene ID" value="ENSG00000138757.15"/>
</dbReference>
<dbReference type="Ensembl" id="ENST00000678578.1">
    <molecule id="Q9UN86-1"/>
    <property type="protein sequence ID" value="ENSP00000503943.1"/>
    <property type="gene ID" value="ENSG00000138757.15"/>
</dbReference>
<dbReference type="Ensembl" id="ENST00000678798.1">
    <molecule id="Q9UN86-1"/>
    <property type="protein sequence ID" value="ENSP00000504585.1"/>
    <property type="gene ID" value="ENSG00000138757.15"/>
</dbReference>
<dbReference type="Ensembl" id="ENST00000678971.1">
    <molecule id="Q9UN86-1"/>
    <property type="protein sequence ID" value="ENSP00000504371.1"/>
    <property type="gene ID" value="ENSG00000138757.15"/>
</dbReference>
<dbReference type="Ensembl" id="ENST00000679281.1">
    <molecule id="Q9UN86-2"/>
    <property type="protein sequence ID" value="ENSP00000504025.1"/>
    <property type="gene ID" value="ENSG00000138757.15"/>
</dbReference>
<dbReference type="GeneID" id="9908"/>
<dbReference type="KEGG" id="hsa:9908"/>
<dbReference type="MANE-Select" id="ENST00000359707.9">
    <property type="protein sequence ID" value="ENSP00000352738.4"/>
    <property type="RefSeq nucleotide sequence ID" value="NM_203505.3"/>
    <property type="RefSeq protein sequence ID" value="NP_987101.1"/>
</dbReference>
<dbReference type="UCSC" id="uc003hir.4">
    <molecule id="Q9UN86-1"/>
    <property type="organism name" value="human"/>
</dbReference>
<dbReference type="AGR" id="HGNC:30291"/>
<dbReference type="CTD" id="9908"/>
<dbReference type="DisGeNET" id="9908"/>
<dbReference type="GeneCards" id="G3BP2"/>
<dbReference type="HGNC" id="HGNC:30291">
    <property type="gene designation" value="G3BP2"/>
</dbReference>
<dbReference type="HPA" id="ENSG00000138757">
    <property type="expression patterns" value="Low tissue specificity"/>
</dbReference>
<dbReference type="MIM" id="620020">
    <property type="type" value="gene"/>
</dbReference>
<dbReference type="neXtProt" id="NX_Q9UN86"/>
<dbReference type="OpenTargets" id="ENSG00000138757"/>
<dbReference type="PharmGKB" id="PA162389134"/>
<dbReference type="VEuPathDB" id="HostDB:ENSG00000138757"/>
<dbReference type="eggNOG" id="KOG0116">
    <property type="taxonomic scope" value="Eukaryota"/>
</dbReference>
<dbReference type="GeneTree" id="ENSGT00390000011365"/>
<dbReference type="HOGENOM" id="CLU_022209_0_2_1"/>
<dbReference type="InParanoid" id="Q9UN86"/>
<dbReference type="OMA" id="RPRGNAY"/>
<dbReference type="OrthoDB" id="339151at2759"/>
<dbReference type="PAN-GO" id="Q9UN86">
    <property type="GO annotations" value="3 GO annotations based on evolutionary models"/>
</dbReference>
<dbReference type="PhylomeDB" id="Q9UN86"/>
<dbReference type="TreeFam" id="TF325464"/>
<dbReference type="PathwayCommons" id="Q9UN86"/>
<dbReference type="Reactome" id="R-HSA-9705671">
    <property type="pathway name" value="SARS-CoV-2 activates/modulates innate and adaptive immune responses"/>
</dbReference>
<dbReference type="SignaLink" id="Q9UN86"/>
<dbReference type="SIGNOR" id="Q9UN86"/>
<dbReference type="BioGRID-ORCS" id="9908">
    <property type="hits" value="29 hits in 1175 CRISPR screens"/>
</dbReference>
<dbReference type="CD-CODE" id="232F8A39">
    <property type="entry name" value="P-body"/>
</dbReference>
<dbReference type="CD-CODE" id="DEE660B4">
    <property type="entry name" value="Stress granule"/>
</dbReference>
<dbReference type="ChiTaRS" id="G3BP2">
    <property type="organism name" value="human"/>
</dbReference>
<dbReference type="EvolutionaryTrace" id="Q9UN86"/>
<dbReference type="GeneWiki" id="G3BP2"/>
<dbReference type="GenomeRNAi" id="9908"/>
<dbReference type="Pharos" id="Q9UN86">
    <property type="development level" value="Tbio"/>
</dbReference>
<dbReference type="PRO" id="PR:Q9UN86"/>
<dbReference type="Proteomes" id="UP000005640">
    <property type="component" value="Chromosome 4"/>
</dbReference>
<dbReference type="RNAct" id="Q9UN86">
    <property type="molecule type" value="protein"/>
</dbReference>
<dbReference type="Bgee" id="ENSG00000138757">
    <property type="expression patterns" value="Expressed in cortical plate and 206 other cell types or tissues"/>
</dbReference>
<dbReference type="ExpressionAtlas" id="Q9UN86">
    <property type="expression patterns" value="baseline and differential"/>
</dbReference>
<dbReference type="GO" id="GO:0005737">
    <property type="term" value="C:cytoplasm"/>
    <property type="evidence" value="ECO:0000303"/>
    <property type="project" value="UniProtKB"/>
</dbReference>
<dbReference type="GO" id="GO:0010494">
    <property type="term" value="C:cytoplasmic stress granule"/>
    <property type="evidence" value="ECO:0000315"/>
    <property type="project" value="UniProtKB"/>
</dbReference>
<dbReference type="GO" id="GO:0005829">
    <property type="term" value="C:cytosol"/>
    <property type="evidence" value="ECO:0000314"/>
    <property type="project" value="HPA"/>
</dbReference>
<dbReference type="GO" id="GO:0140693">
    <property type="term" value="F:molecular condensate scaffold activity"/>
    <property type="evidence" value="ECO:0000314"/>
    <property type="project" value="UniProtKB"/>
</dbReference>
<dbReference type="GO" id="GO:0003729">
    <property type="term" value="F:mRNA binding"/>
    <property type="evidence" value="ECO:0000318"/>
    <property type="project" value="GO_Central"/>
</dbReference>
<dbReference type="GO" id="GO:0003723">
    <property type="term" value="F:RNA binding"/>
    <property type="evidence" value="ECO:0007005"/>
    <property type="project" value="UniProtKB"/>
</dbReference>
<dbReference type="GO" id="GO:0030159">
    <property type="term" value="F:signaling receptor complex adaptor activity"/>
    <property type="evidence" value="ECO:0000303"/>
    <property type="project" value="UniProtKB"/>
</dbReference>
<dbReference type="GO" id="GO:0045087">
    <property type="term" value="P:innate immune response"/>
    <property type="evidence" value="ECO:0007669"/>
    <property type="project" value="UniProtKB-KW"/>
</dbReference>
<dbReference type="GO" id="GO:0051028">
    <property type="term" value="P:mRNA transport"/>
    <property type="evidence" value="ECO:0007669"/>
    <property type="project" value="UniProtKB-KW"/>
</dbReference>
<dbReference type="GO" id="GO:0051260">
    <property type="term" value="P:protein homooligomerization"/>
    <property type="evidence" value="ECO:0000315"/>
    <property type="project" value="UniProtKB"/>
</dbReference>
<dbReference type="GO" id="GO:0034063">
    <property type="term" value="P:stress granule assembly"/>
    <property type="evidence" value="ECO:0000314"/>
    <property type="project" value="UniProtKB"/>
</dbReference>
<dbReference type="CDD" id="cd00780">
    <property type="entry name" value="NTF2"/>
    <property type="match status" value="1"/>
</dbReference>
<dbReference type="CDD" id="cd12464">
    <property type="entry name" value="RRM_G3BP2"/>
    <property type="match status" value="1"/>
</dbReference>
<dbReference type="FunFam" id="3.10.450.50:FF:000002">
    <property type="entry name" value="Ras GTPase-activating protein-binding protein 2 isoform 1"/>
    <property type="match status" value="1"/>
</dbReference>
<dbReference type="FunFam" id="3.30.70.330:FF:000327">
    <property type="entry name" value="ras GTPase-activating protein-binding protein 2 isoform X1"/>
    <property type="match status" value="1"/>
</dbReference>
<dbReference type="Gene3D" id="3.10.450.50">
    <property type="match status" value="1"/>
</dbReference>
<dbReference type="Gene3D" id="3.30.70.330">
    <property type="match status" value="1"/>
</dbReference>
<dbReference type="InterPro" id="IPR034376">
    <property type="entry name" value="G3BP2_RRM"/>
</dbReference>
<dbReference type="InterPro" id="IPR032710">
    <property type="entry name" value="NTF2-like_dom_sf"/>
</dbReference>
<dbReference type="InterPro" id="IPR002075">
    <property type="entry name" value="NTF2_dom"/>
</dbReference>
<dbReference type="InterPro" id="IPR018222">
    <property type="entry name" value="Nuclear_transport_factor_2_euk"/>
</dbReference>
<dbReference type="InterPro" id="IPR012677">
    <property type="entry name" value="Nucleotide-bd_a/b_plait_sf"/>
</dbReference>
<dbReference type="InterPro" id="IPR039539">
    <property type="entry name" value="Ras_GTPase_bind_prot"/>
</dbReference>
<dbReference type="InterPro" id="IPR035979">
    <property type="entry name" value="RBD_domain_sf"/>
</dbReference>
<dbReference type="InterPro" id="IPR000504">
    <property type="entry name" value="RRM_dom"/>
</dbReference>
<dbReference type="PANTHER" id="PTHR10693">
    <property type="entry name" value="RAS GTPASE-ACTIVATING PROTEIN-BINDING PROTEIN"/>
    <property type="match status" value="1"/>
</dbReference>
<dbReference type="PANTHER" id="PTHR10693:SF10">
    <property type="entry name" value="RAS GTPASE-ACTIVATING PROTEIN-BINDING PROTEIN 2"/>
    <property type="match status" value="1"/>
</dbReference>
<dbReference type="Pfam" id="PF02136">
    <property type="entry name" value="NTF2"/>
    <property type="match status" value="1"/>
</dbReference>
<dbReference type="Pfam" id="PF00076">
    <property type="entry name" value="RRM_1"/>
    <property type="match status" value="1"/>
</dbReference>
<dbReference type="SMART" id="SM00360">
    <property type="entry name" value="RRM"/>
    <property type="match status" value="1"/>
</dbReference>
<dbReference type="SUPFAM" id="SSF54427">
    <property type="entry name" value="NTF2-like"/>
    <property type="match status" value="1"/>
</dbReference>
<dbReference type="SUPFAM" id="SSF54928">
    <property type="entry name" value="RNA-binding domain, RBD"/>
    <property type="match status" value="1"/>
</dbReference>
<dbReference type="PROSITE" id="PS50177">
    <property type="entry name" value="NTF2_DOMAIN"/>
    <property type="match status" value="1"/>
</dbReference>
<dbReference type="PROSITE" id="PS50102">
    <property type="entry name" value="RRM"/>
    <property type="match status" value="1"/>
</dbReference>
<protein>
    <recommendedName>
        <fullName>Ras GTPase-activating protein-binding protein 2</fullName>
        <shortName>G3BP-2</shortName>
    </recommendedName>
    <alternativeName>
        <fullName>GAP SH3 domain-binding protein 2</fullName>
    </alternativeName>
</protein>
<name>G3BP2_HUMAN</name>
<evidence type="ECO:0000250" key="1">
    <source>
        <dbReference type="UniProtKB" id="P97379"/>
    </source>
</evidence>
<evidence type="ECO:0000250" key="2">
    <source>
        <dbReference type="UniProtKB" id="Q13283"/>
    </source>
</evidence>
<evidence type="ECO:0000255" key="3">
    <source>
        <dbReference type="PROSITE-ProRule" id="PRU00137"/>
    </source>
</evidence>
<evidence type="ECO:0000255" key="4">
    <source>
        <dbReference type="PROSITE-ProRule" id="PRU00176"/>
    </source>
</evidence>
<evidence type="ECO:0000256" key="5">
    <source>
        <dbReference type="SAM" id="MobiDB-lite"/>
    </source>
</evidence>
<evidence type="ECO:0000269" key="6">
    <source>
    </source>
</evidence>
<evidence type="ECO:0000269" key="7">
    <source>
    </source>
</evidence>
<evidence type="ECO:0000269" key="8">
    <source>
    </source>
</evidence>
<evidence type="ECO:0000269" key="9">
    <source>
    </source>
</evidence>
<evidence type="ECO:0000269" key="10">
    <source>
    </source>
</evidence>
<evidence type="ECO:0000269" key="11">
    <source>
    </source>
</evidence>
<evidence type="ECO:0000269" key="12">
    <source>
    </source>
</evidence>
<evidence type="ECO:0000269" key="13">
    <source>
    </source>
</evidence>
<evidence type="ECO:0000269" key="14">
    <source>
    </source>
</evidence>
<evidence type="ECO:0000269" key="15">
    <source>
    </source>
</evidence>
<evidence type="ECO:0000269" key="16">
    <source>
    </source>
</evidence>
<evidence type="ECO:0000269" key="17">
    <source>
    </source>
</evidence>
<evidence type="ECO:0000269" key="18">
    <source ref="8"/>
</evidence>
<evidence type="ECO:0000303" key="19">
    <source>
    </source>
</evidence>
<evidence type="ECO:0000303" key="20">
    <source>
    </source>
</evidence>
<evidence type="ECO:0000303" key="21">
    <source ref="1"/>
</evidence>
<evidence type="ECO:0000303" key="22">
    <source ref="3"/>
</evidence>
<evidence type="ECO:0000303" key="23">
    <source ref="4"/>
</evidence>
<evidence type="ECO:0000305" key="24"/>
<evidence type="ECO:0000312" key="25">
    <source>
        <dbReference type="HGNC" id="HGNC:30291"/>
    </source>
</evidence>
<evidence type="ECO:0007744" key="26">
    <source>
        <dbReference type="PDB" id="5DRV"/>
    </source>
</evidence>
<evidence type="ECO:0007744" key="27">
    <source>
    </source>
</evidence>
<evidence type="ECO:0007744" key="28">
    <source>
    </source>
</evidence>
<evidence type="ECO:0007744" key="29">
    <source>
    </source>
</evidence>
<evidence type="ECO:0007744" key="30">
    <source>
    </source>
</evidence>
<evidence type="ECO:0007744" key="31">
    <source>
    </source>
</evidence>
<evidence type="ECO:0007744" key="32">
    <source>
    </source>
</evidence>
<evidence type="ECO:0007744" key="33">
    <source>
    </source>
</evidence>
<evidence type="ECO:0007744" key="34">
    <source>
    </source>
</evidence>
<evidence type="ECO:0007744" key="35">
    <source>
    </source>
</evidence>
<evidence type="ECO:0007829" key="36">
    <source>
        <dbReference type="PDB" id="5DRV"/>
    </source>
</evidence>